<keyword id="KW-0030">Aminoacyl-tRNA synthetase</keyword>
<keyword id="KW-0067">ATP-binding</keyword>
<keyword id="KW-0963">Cytoplasm</keyword>
<keyword id="KW-0436">Ligase</keyword>
<keyword id="KW-0547">Nucleotide-binding</keyword>
<keyword id="KW-0648">Protein biosynthesis</keyword>
<gene>
    <name evidence="1" type="primary">proS</name>
    <name type="ordered locus">Cag_0711</name>
</gene>
<protein>
    <recommendedName>
        <fullName evidence="1">Proline--tRNA ligase</fullName>
        <ecNumber evidence="1">6.1.1.15</ecNumber>
    </recommendedName>
    <alternativeName>
        <fullName evidence="1">Prolyl-tRNA synthetase</fullName>
        <shortName evidence="1">ProRS</shortName>
    </alternativeName>
</protein>
<name>SYP_CHLCH</name>
<feature type="chain" id="PRO_0000249126" description="Proline--tRNA ligase">
    <location>
        <begin position="1"/>
        <end position="481"/>
    </location>
</feature>
<sequence length="481" mass="54619">MADKITSRSEDYSQWYIDLVRSAKLADYADVKGCMVIRPNGYAIWEKMQAALDRMFKETGHVNAYFPLFIPESFIAKEAEHIEGFAPECAVVTHGGGQELAEKLYVRPTSETIIWSSYKKWIQSYRDLPLLINQWANVVRWEMRTRLFLRTTEFLWQEGHTAHATHEEAQEEVLRMINVYKTFAEEYMALPVILGKKSDSEKFAGALETFCIEAMMQDGKALQAGTSHDLGQNFAKAFDCKFQTHEKTLEYVWATSWGVSTRLIGALIMAHSDDRGLVLPPRLATRQVVIIPILKGDKESVLHHADNIAAALTKAGISAFVDSSEQNSPGWKFAEYELQGIPLRLELGPRDIKNGMCVVARRDTLEKTEIALDDRLVMSINEILNDIQQDMFDAALRFRQERTVQVNNYDDFKVAVEKGFVIAHWDGTVETEAKIKEETKATIRVLPQEDDYCDTYGINEPGTCIYSGKPSARKVVFAKAY</sequence>
<comment type="function">
    <text evidence="1">Catalyzes the attachment of proline to tRNA(Pro) in a two-step reaction: proline is first activated by ATP to form Pro-AMP and then transferred to the acceptor end of tRNA(Pro).</text>
</comment>
<comment type="catalytic activity">
    <reaction evidence="1">
        <text>tRNA(Pro) + L-proline + ATP = L-prolyl-tRNA(Pro) + AMP + diphosphate</text>
        <dbReference type="Rhea" id="RHEA:14305"/>
        <dbReference type="Rhea" id="RHEA-COMP:9700"/>
        <dbReference type="Rhea" id="RHEA-COMP:9702"/>
        <dbReference type="ChEBI" id="CHEBI:30616"/>
        <dbReference type="ChEBI" id="CHEBI:33019"/>
        <dbReference type="ChEBI" id="CHEBI:60039"/>
        <dbReference type="ChEBI" id="CHEBI:78442"/>
        <dbReference type="ChEBI" id="CHEBI:78532"/>
        <dbReference type="ChEBI" id="CHEBI:456215"/>
        <dbReference type="EC" id="6.1.1.15"/>
    </reaction>
</comment>
<comment type="subunit">
    <text evidence="1">Homodimer.</text>
</comment>
<comment type="subcellular location">
    <subcellularLocation>
        <location evidence="1">Cytoplasm</location>
    </subcellularLocation>
</comment>
<comment type="domain">
    <text evidence="1">Consists of three domains: the N-terminal catalytic domain, the anticodon-binding domain and the C-terminal extension.</text>
</comment>
<comment type="similarity">
    <text evidence="1">Belongs to the class-II aminoacyl-tRNA synthetase family. ProS type 3 subfamily.</text>
</comment>
<reference key="1">
    <citation type="submission" date="2005-08" db="EMBL/GenBank/DDBJ databases">
        <title>Complete sequence of Chlorobium chlorochromatii CaD3.</title>
        <authorList>
            <consortium name="US DOE Joint Genome Institute"/>
            <person name="Copeland A."/>
            <person name="Lucas S."/>
            <person name="Lapidus A."/>
            <person name="Barry K."/>
            <person name="Detter J.C."/>
            <person name="Glavina T."/>
            <person name="Hammon N."/>
            <person name="Israni S."/>
            <person name="Pitluck S."/>
            <person name="Bryant D."/>
            <person name="Schmutz J."/>
            <person name="Larimer F."/>
            <person name="Land M."/>
            <person name="Kyrpides N."/>
            <person name="Ivanova N."/>
            <person name="Richardson P."/>
        </authorList>
    </citation>
    <scope>NUCLEOTIDE SEQUENCE [LARGE SCALE GENOMIC DNA]</scope>
    <source>
        <strain>CaD3</strain>
    </source>
</reference>
<accession>Q3ASP3</accession>
<proteinExistence type="inferred from homology"/>
<organism>
    <name type="scientific">Chlorobium chlorochromatii (strain CaD3)</name>
    <dbReference type="NCBI Taxonomy" id="340177"/>
    <lineage>
        <taxon>Bacteria</taxon>
        <taxon>Pseudomonadati</taxon>
        <taxon>Chlorobiota</taxon>
        <taxon>Chlorobiia</taxon>
        <taxon>Chlorobiales</taxon>
        <taxon>Chlorobiaceae</taxon>
        <taxon>Chlorobium/Pelodictyon group</taxon>
        <taxon>Chlorobium</taxon>
    </lineage>
</organism>
<evidence type="ECO:0000255" key="1">
    <source>
        <dbReference type="HAMAP-Rule" id="MF_01571"/>
    </source>
</evidence>
<dbReference type="EC" id="6.1.1.15" evidence="1"/>
<dbReference type="EMBL" id="CP000108">
    <property type="protein sequence ID" value="ABB27982.1"/>
    <property type="molecule type" value="Genomic_DNA"/>
</dbReference>
<dbReference type="SMR" id="Q3ASP3"/>
<dbReference type="STRING" id="340177.Cag_0711"/>
<dbReference type="KEGG" id="cch:Cag_0711"/>
<dbReference type="eggNOG" id="COG0442">
    <property type="taxonomic scope" value="Bacteria"/>
</dbReference>
<dbReference type="HOGENOM" id="CLU_001882_4_2_10"/>
<dbReference type="OrthoDB" id="9809052at2"/>
<dbReference type="GO" id="GO:0017101">
    <property type="term" value="C:aminoacyl-tRNA synthetase multienzyme complex"/>
    <property type="evidence" value="ECO:0007669"/>
    <property type="project" value="TreeGrafter"/>
</dbReference>
<dbReference type="GO" id="GO:0005737">
    <property type="term" value="C:cytoplasm"/>
    <property type="evidence" value="ECO:0007669"/>
    <property type="project" value="UniProtKB-SubCell"/>
</dbReference>
<dbReference type="GO" id="GO:0005524">
    <property type="term" value="F:ATP binding"/>
    <property type="evidence" value="ECO:0007669"/>
    <property type="project" value="UniProtKB-UniRule"/>
</dbReference>
<dbReference type="GO" id="GO:0004827">
    <property type="term" value="F:proline-tRNA ligase activity"/>
    <property type="evidence" value="ECO:0007669"/>
    <property type="project" value="UniProtKB-UniRule"/>
</dbReference>
<dbReference type="GO" id="GO:0006433">
    <property type="term" value="P:prolyl-tRNA aminoacylation"/>
    <property type="evidence" value="ECO:0007669"/>
    <property type="project" value="UniProtKB-UniRule"/>
</dbReference>
<dbReference type="CDD" id="cd00862">
    <property type="entry name" value="ProRS_anticodon_zinc"/>
    <property type="match status" value="1"/>
</dbReference>
<dbReference type="CDD" id="cd00778">
    <property type="entry name" value="ProRS_core_arch_euk"/>
    <property type="match status" value="1"/>
</dbReference>
<dbReference type="FunFam" id="3.30.930.10:FF:000023">
    <property type="entry name" value="Proline--tRNA ligase"/>
    <property type="match status" value="1"/>
</dbReference>
<dbReference type="Gene3D" id="3.40.50.800">
    <property type="entry name" value="Anticodon-binding domain"/>
    <property type="match status" value="1"/>
</dbReference>
<dbReference type="Gene3D" id="3.30.930.10">
    <property type="entry name" value="Bira Bifunctional Protein, Domain 2"/>
    <property type="match status" value="1"/>
</dbReference>
<dbReference type="Gene3D" id="3.30.110.30">
    <property type="entry name" value="C-terminal domain of ProRS"/>
    <property type="match status" value="1"/>
</dbReference>
<dbReference type="HAMAP" id="MF_01571">
    <property type="entry name" value="Pro_tRNA_synth_type3"/>
    <property type="match status" value="1"/>
</dbReference>
<dbReference type="InterPro" id="IPR002314">
    <property type="entry name" value="aa-tRNA-synt_IIb"/>
</dbReference>
<dbReference type="InterPro" id="IPR006195">
    <property type="entry name" value="aa-tRNA-synth_II"/>
</dbReference>
<dbReference type="InterPro" id="IPR045864">
    <property type="entry name" value="aa-tRNA-synth_II/BPL/LPL"/>
</dbReference>
<dbReference type="InterPro" id="IPR004154">
    <property type="entry name" value="Anticodon-bd"/>
</dbReference>
<dbReference type="InterPro" id="IPR036621">
    <property type="entry name" value="Anticodon-bd_dom_sf"/>
</dbReference>
<dbReference type="InterPro" id="IPR002316">
    <property type="entry name" value="Pro-tRNA-ligase_IIa"/>
</dbReference>
<dbReference type="InterPro" id="IPR004499">
    <property type="entry name" value="Pro-tRNA-ligase_IIa_arc-type"/>
</dbReference>
<dbReference type="InterPro" id="IPR016061">
    <property type="entry name" value="Pro-tRNA_ligase_II_C"/>
</dbReference>
<dbReference type="InterPro" id="IPR017449">
    <property type="entry name" value="Pro-tRNA_synth_II"/>
</dbReference>
<dbReference type="InterPro" id="IPR033721">
    <property type="entry name" value="ProRS_core_arch_euk"/>
</dbReference>
<dbReference type="NCBIfam" id="TIGR00408">
    <property type="entry name" value="proS_fam_I"/>
    <property type="match status" value="1"/>
</dbReference>
<dbReference type="PANTHER" id="PTHR43382:SF2">
    <property type="entry name" value="BIFUNCTIONAL GLUTAMATE_PROLINE--TRNA LIGASE"/>
    <property type="match status" value="1"/>
</dbReference>
<dbReference type="PANTHER" id="PTHR43382">
    <property type="entry name" value="PROLYL-TRNA SYNTHETASE"/>
    <property type="match status" value="1"/>
</dbReference>
<dbReference type="Pfam" id="PF03129">
    <property type="entry name" value="HGTP_anticodon"/>
    <property type="match status" value="1"/>
</dbReference>
<dbReference type="Pfam" id="PF09180">
    <property type="entry name" value="ProRS-C_1"/>
    <property type="match status" value="1"/>
</dbReference>
<dbReference type="Pfam" id="PF00587">
    <property type="entry name" value="tRNA-synt_2b"/>
    <property type="match status" value="1"/>
</dbReference>
<dbReference type="PRINTS" id="PR01046">
    <property type="entry name" value="TRNASYNTHPRO"/>
</dbReference>
<dbReference type="SMART" id="SM00946">
    <property type="entry name" value="ProRS-C_1"/>
    <property type="match status" value="1"/>
</dbReference>
<dbReference type="SUPFAM" id="SSF64586">
    <property type="entry name" value="C-terminal domain of ProRS"/>
    <property type="match status" value="1"/>
</dbReference>
<dbReference type="SUPFAM" id="SSF52954">
    <property type="entry name" value="Class II aaRS ABD-related"/>
    <property type="match status" value="1"/>
</dbReference>
<dbReference type="SUPFAM" id="SSF55681">
    <property type="entry name" value="Class II aaRS and biotin synthetases"/>
    <property type="match status" value="1"/>
</dbReference>
<dbReference type="PROSITE" id="PS50862">
    <property type="entry name" value="AA_TRNA_LIGASE_II"/>
    <property type="match status" value="1"/>
</dbReference>